<dbReference type="EMBL" id="L22143">
    <property type="protein sequence ID" value="AAA39320.1"/>
    <property type="molecule type" value="Genomic_DNA"/>
</dbReference>
<dbReference type="EMBL" id="L22096">
    <property type="protein sequence ID" value="AAA39320.1"/>
    <property type="status" value="JOINED"/>
    <property type="molecule type" value="Genomic_DNA"/>
</dbReference>
<dbReference type="EMBL" id="L22097">
    <property type="protein sequence ID" value="AAA39320.1"/>
    <property type="status" value="JOINED"/>
    <property type="molecule type" value="Genomic_DNA"/>
</dbReference>
<dbReference type="EMBL" id="L22098">
    <property type="protein sequence ID" value="AAA39320.1"/>
    <property type="status" value="JOINED"/>
    <property type="molecule type" value="Genomic_DNA"/>
</dbReference>
<dbReference type="EMBL" id="L22099">
    <property type="protein sequence ID" value="AAA39320.1"/>
    <property type="status" value="JOINED"/>
    <property type="molecule type" value="Genomic_DNA"/>
</dbReference>
<dbReference type="EMBL" id="L22100">
    <property type="protein sequence ID" value="AAA39320.1"/>
    <property type="status" value="JOINED"/>
    <property type="molecule type" value="Genomic_DNA"/>
</dbReference>
<dbReference type="EMBL" id="L22101">
    <property type="protein sequence ID" value="AAA39320.1"/>
    <property type="status" value="JOINED"/>
    <property type="molecule type" value="Genomic_DNA"/>
</dbReference>
<dbReference type="EMBL" id="L22102">
    <property type="protein sequence ID" value="AAA39320.1"/>
    <property type="status" value="JOINED"/>
    <property type="molecule type" value="Genomic_DNA"/>
</dbReference>
<dbReference type="EMBL" id="L22103">
    <property type="protein sequence ID" value="AAA39320.1"/>
    <property type="status" value="JOINED"/>
    <property type="molecule type" value="Genomic_DNA"/>
</dbReference>
<dbReference type="EMBL" id="L22104">
    <property type="protein sequence ID" value="AAA39320.1"/>
    <property type="status" value="JOINED"/>
    <property type="molecule type" value="Genomic_DNA"/>
</dbReference>
<dbReference type="EMBL" id="L22105">
    <property type="protein sequence ID" value="AAA39320.1"/>
    <property type="status" value="JOINED"/>
    <property type="molecule type" value="Genomic_DNA"/>
</dbReference>
<dbReference type="EMBL" id="L22106">
    <property type="protein sequence ID" value="AAA39320.1"/>
    <property type="status" value="JOINED"/>
    <property type="molecule type" value="Genomic_DNA"/>
</dbReference>
<dbReference type="EMBL" id="L22107">
    <property type="protein sequence ID" value="AAA39320.1"/>
    <property type="status" value="JOINED"/>
    <property type="molecule type" value="Genomic_DNA"/>
</dbReference>
<dbReference type="EMBL" id="L22108">
    <property type="protein sequence ID" value="AAA39320.1"/>
    <property type="status" value="JOINED"/>
    <property type="molecule type" value="Genomic_DNA"/>
</dbReference>
<dbReference type="EMBL" id="L22109">
    <property type="protein sequence ID" value="AAA39320.1"/>
    <property type="status" value="JOINED"/>
    <property type="molecule type" value="Genomic_DNA"/>
</dbReference>
<dbReference type="EMBL" id="L22110">
    <property type="protein sequence ID" value="AAA39320.1"/>
    <property type="status" value="JOINED"/>
    <property type="molecule type" value="Genomic_DNA"/>
</dbReference>
<dbReference type="EMBL" id="L22111">
    <property type="protein sequence ID" value="AAA39320.1"/>
    <property type="status" value="JOINED"/>
    <property type="molecule type" value="Genomic_DNA"/>
</dbReference>
<dbReference type="EMBL" id="L22112">
    <property type="protein sequence ID" value="AAA39320.1"/>
    <property type="status" value="JOINED"/>
    <property type="molecule type" value="Genomic_DNA"/>
</dbReference>
<dbReference type="EMBL" id="L22113">
    <property type="protein sequence ID" value="AAA39320.1"/>
    <property type="status" value="JOINED"/>
    <property type="molecule type" value="Genomic_DNA"/>
</dbReference>
<dbReference type="EMBL" id="L22114">
    <property type="protein sequence ID" value="AAA39320.1"/>
    <property type="status" value="JOINED"/>
    <property type="molecule type" value="Genomic_DNA"/>
</dbReference>
<dbReference type="EMBL" id="L22115">
    <property type="protein sequence ID" value="AAA39320.1"/>
    <property type="status" value="JOINED"/>
    <property type="molecule type" value="Genomic_DNA"/>
</dbReference>
<dbReference type="EMBL" id="L22116">
    <property type="protein sequence ID" value="AAA39320.1"/>
    <property type="status" value="JOINED"/>
    <property type="molecule type" value="Genomic_DNA"/>
</dbReference>
<dbReference type="EMBL" id="L22117">
    <property type="protein sequence ID" value="AAA39320.1"/>
    <property type="status" value="JOINED"/>
    <property type="molecule type" value="Genomic_DNA"/>
</dbReference>
<dbReference type="EMBL" id="L22118">
    <property type="protein sequence ID" value="AAA39320.1"/>
    <property type="status" value="JOINED"/>
    <property type="molecule type" value="Genomic_DNA"/>
</dbReference>
<dbReference type="EMBL" id="L22119">
    <property type="protein sequence ID" value="AAA39320.1"/>
    <property type="status" value="JOINED"/>
    <property type="molecule type" value="Genomic_DNA"/>
</dbReference>
<dbReference type="EMBL" id="L22120">
    <property type="protein sequence ID" value="AAA39320.1"/>
    <property type="status" value="JOINED"/>
    <property type="molecule type" value="Genomic_DNA"/>
</dbReference>
<dbReference type="EMBL" id="L22121">
    <property type="protein sequence ID" value="AAA39320.1"/>
    <property type="status" value="JOINED"/>
    <property type="molecule type" value="Genomic_DNA"/>
</dbReference>
<dbReference type="EMBL" id="L22122">
    <property type="protein sequence ID" value="AAA39320.1"/>
    <property type="status" value="JOINED"/>
    <property type="molecule type" value="Genomic_DNA"/>
</dbReference>
<dbReference type="EMBL" id="L22123">
    <property type="protein sequence ID" value="AAA39320.1"/>
    <property type="status" value="JOINED"/>
    <property type="molecule type" value="Genomic_DNA"/>
</dbReference>
<dbReference type="EMBL" id="L22124">
    <property type="protein sequence ID" value="AAA39320.1"/>
    <property type="status" value="JOINED"/>
    <property type="molecule type" value="Genomic_DNA"/>
</dbReference>
<dbReference type="EMBL" id="L22125">
    <property type="protein sequence ID" value="AAA39320.1"/>
    <property type="status" value="JOINED"/>
    <property type="molecule type" value="Genomic_DNA"/>
</dbReference>
<dbReference type="EMBL" id="L22126">
    <property type="protein sequence ID" value="AAA39320.1"/>
    <property type="status" value="JOINED"/>
    <property type="molecule type" value="Genomic_DNA"/>
</dbReference>
<dbReference type="EMBL" id="L22127">
    <property type="protein sequence ID" value="AAA39320.1"/>
    <property type="status" value="JOINED"/>
    <property type="molecule type" value="Genomic_DNA"/>
</dbReference>
<dbReference type="EMBL" id="L22128">
    <property type="protein sequence ID" value="AAA39320.1"/>
    <property type="status" value="JOINED"/>
    <property type="molecule type" value="Genomic_DNA"/>
</dbReference>
<dbReference type="EMBL" id="L22129">
    <property type="protein sequence ID" value="AAA39320.1"/>
    <property type="status" value="JOINED"/>
    <property type="molecule type" value="Genomic_DNA"/>
</dbReference>
<dbReference type="EMBL" id="L22130">
    <property type="protein sequence ID" value="AAA39320.1"/>
    <property type="status" value="JOINED"/>
    <property type="molecule type" value="Genomic_DNA"/>
</dbReference>
<dbReference type="EMBL" id="L22131">
    <property type="protein sequence ID" value="AAA39320.1"/>
    <property type="status" value="JOINED"/>
    <property type="molecule type" value="Genomic_DNA"/>
</dbReference>
<dbReference type="EMBL" id="L22132">
    <property type="protein sequence ID" value="AAA39320.1"/>
    <property type="status" value="JOINED"/>
    <property type="molecule type" value="Genomic_DNA"/>
</dbReference>
<dbReference type="EMBL" id="L22133">
    <property type="protein sequence ID" value="AAA39320.1"/>
    <property type="status" value="JOINED"/>
    <property type="molecule type" value="Genomic_DNA"/>
</dbReference>
<dbReference type="EMBL" id="L22134">
    <property type="protein sequence ID" value="AAA39320.1"/>
    <property type="status" value="JOINED"/>
    <property type="molecule type" value="Genomic_DNA"/>
</dbReference>
<dbReference type="EMBL" id="L22135">
    <property type="protein sequence ID" value="AAA39320.1"/>
    <property type="status" value="JOINED"/>
    <property type="molecule type" value="Genomic_DNA"/>
</dbReference>
<dbReference type="EMBL" id="L22136">
    <property type="protein sequence ID" value="AAA39320.1"/>
    <property type="status" value="JOINED"/>
    <property type="molecule type" value="Genomic_DNA"/>
</dbReference>
<dbReference type="EMBL" id="L22137">
    <property type="protein sequence ID" value="AAA39320.1"/>
    <property type="status" value="JOINED"/>
    <property type="molecule type" value="Genomic_DNA"/>
</dbReference>
<dbReference type="EMBL" id="L22138">
    <property type="protein sequence ID" value="AAA39320.1"/>
    <property type="status" value="JOINED"/>
    <property type="molecule type" value="Genomic_DNA"/>
</dbReference>
<dbReference type="EMBL" id="L22139">
    <property type="protein sequence ID" value="AAA39320.1"/>
    <property type="status" value="JOINED"/>
    <property type="molecule type" value="Genomic_DNA"/>
</dbReference>
<dbReference type="EMBL" id="L22140">
    <property type="protein sequence ID" value="AAA39320.1"/>
    <property type="status" value="JOINED"/>
    <property type="molecule type" value="Genomic_DNA"/>
</dbReference>
<dbReference type="EMBL" id="L22141">
    <property type="protein sequence ID" value="AAA39320.1"/>
    <property type="status" value="JOINED"/>
    <property type="molecule type" value="Genomic_DNA"/>
</dbReference>
<dbReference type="EMBL" id="L22142">
    <property type="protein sequence ID" value="AAA39320.1"/>
    <property type="status" value="JOINED"/>
    <property type="molecule type" value="Genomic_DNA"/>
</dbReference>
<dbReference type="EMBL" id="U04710">
    <property type="protein sequence ID" value="AAA19568.1"/>
    <property type="molecule type" value="mRNA"/>
</dbReference>
<dbReference type="EMBL" id="L06445">
    <property type="protein sequence ID" value="AAA37921.1"/>
    <property type="molecule type" value="Genomic_DNA"/>
</dbReference>
<dbReference type="EMBL" id="L06446">
    <property type="protein sequence ID" value="AAA37922.1"/>
    <property type="molecule type" value="Genomic_DNA"/>
</dbReference>
<dbReference type="EMBL" id="U26348">
    <property type="protein sequence ID" value="AAA98844.1"/>
    <property type="molecule type" value="Genomic_DNA"/>
</dbReference>
<dbReference type="EMBL" id="M58586">
    <property type="protein sequence ID" value="AAA39483.1"/>
    <property type="molecule type" value="Genomic_DNA"/>
</dbReference>
<dbReference type="EMBL" id="X60389">
    <property type="protein sequence ID" value="CAA42940.1"/>
    <property type="molecule type" value="mRNA"/>
</dbReference>
<dbReference type="EMBL" id="L19500">
    <property type="protein sequence ID" value="AAA16037.1"/>
    <property type="molecule type" value="mRNA"/>
</dbReference>
<dbReference type="CCDS" id="CCDS37436.1"/>
<dbReference type="PIR" id="A49617">
    <property type="entry name" value="A49617"/>
</dbReference>
<dbReference type="PIR" id="I48922">
    <property type="entry name" value="I48922"/>
</dbReference>
<dbReference type="RefSeq" id="NP_034645.2">
    <property type="nucleotide sequence ID" value="NM_010515.2"/>
</dbReference>
<dbReference type="SMR" id="Q07113"/>
<dbReference type="BioGRID" id="200550">
    <property type="interactions" value="12"/>
</dbReference>
<dbReference type="FunCoup" id="Q07113">
    <property type="interactions" value="1988"/>
</dbReference>
<dbReference type="IntAct" id="Q07113">
    <property type="interactions" value="8"/>
</dbReference>
<dbReference type="MINT" id="Q07113"/>
<dbReference type="STRING" id="10090.ENSMUSP00000024599"/>
<dbReference type="GlyConnect" id="2195">
    <property type="glycosylation" value="7 N-Linked glycans (6 sites)"/>
</dbReference>
<dbReference type="GlyCosmos" id="Q07113">
    <property type="glycosylation" value="20 sites, 7 glycans"/>
</dbReference>
<dbReference type="GlyGen" id="Q07113">
    <property type="glycosylation" value="24 sites, 17 N-linked glycans (18 sites), 1 O-linked glycan (1 site)"/>
</dbReference>
<dbReference type="iPTMnet" id="Q07113"/>
<dbReference type="PhosphoSitePlus" id="Q07113"/>
<dbReference type="SwissPalm" id="Q07113"/>
<dbReference type="jPOST" id="Q07113"/>
<dbReference type="PaxDb" id="10090-ENSMUSP00000024599"/>
<dbReference type="PeptideAtlas" id="Q07113"/>
<dbReference type="ProteomicsDB" id="295591"/>
<dbReference type="Pumba" id="Q07113"/>
<dbReference type="Antibodypedia" id="1396">
    <property type="antibodies" value="725 antibodies from 41 providers"/>
</dbReference>
<dbReference type="DNASU" id="16004"/>
<dbReference type="Ensembl" id="ENSMUST00000024599.14">
    <property type="protein sequence ID" value="ENSMUSP00000024599.8"/>
    <property type="gene ID" value="ENSMUSG00000023830.15"/>
</dbReference>
<dbReference type="GeneID" id="16004"/>
<dbReference type="KEGG" id="mmu:16004"/>
<dbReference type="UCSC" id="uc008aky.1">
    <property type="organism name" value="mouse"/>
</dbReference>
<dbReference type="AGR" id="MGI:96435"/>
<dbReference type="CTD" id="3482"/>
<dbReference type="MGI" id="MGI:96435">
    <property type="gene designation" value="Igf2r"/>
</dbReference>
<dbReference type="VEuPathDB" id="HostDB:ENSMUSG00000023830"/>
<dbReference type="eggNOG" id="KOG4504">
    <property type="taxonomic scope" value="Eukaryota"/>
</dbReference>
<dbReference type="GeneTree" id="ENSGT00390000013943"/>
<dbReference type="HOGENOM" id="CLU_001182_0_0_1"/>
<dbReference type="InParanoid" id="Q07113"/>
<dbReference type="OMA" id="FITYQSS"/>
<dbReference type="OrthoDB" id="4504960at2759"/>
<dbReference type="PhylomeDB" id="Q07113"/>
<dbReference type="TreeFam" id="TF328963"/>
<dbReference type="Reactome" id="R-MMU-432722">
    <property type="pathway name" value="Golgi Associated Vesicle Biogenesis"/>
</dbReference>
<dbReference type="Reactome" id="R-MMU-6798695">
    <property type="pathway name" value="Neutrophil degranulation"/>
</dbReference>
<dbReference type="Reactome" id="R-MMU-6811440">
    <property type="pathway name" value="Retrograde transport at the Trans-Golgi-Network"/>
</dbReference>
<dbReference type="Reactome" id="R-MMU-8856825">
    <property type="pathway name" value="Cargo recognition for clathrin-mediated endocytosis"/>
</dbReference>
<dbReference type="Reactome" id="R-MMU-8856828">
    <property type="pathway name" value="Clathrin-mediated endocytosis"/>
</dbReference>
<dbReference type="BioGRID-ORCS" id="16004">
    <property type="hits" value="5 hits in 80 CRISPR screens"/>
</dbReference>
<dbReference type="ChiTaRS" id="Igf2r">
    <property type="organism name" value="mouse"/>
</dbReference>
<dbReference type="PRO" id="PR:Q07113"/>
<dbReference type="Proteomes" id="UP000000589">
    <property type="component" value="Chromosome 17"/>
</dbReference>
<dbReference type="RNAct" id="Q07113">
    <property type="molecule type" value="protein"/>
</dbReference>
<dbReference type="Bgee" id="ENSMUSG00000023830">
    <property type="expression patterns" value="Expressed in cardiac atrium and 299 other cell types or tissues"/>
</dbReference>
<dbReference type="GO" id="GO:0009986">
    <property type="term" value="C:cell surface"/>
    <property type="evidence" value="ECO:0000250"/>
    <property type="project" value="UniProtKB"/>
</dbReference>
<dbReference type="GO" id="GO:0030118">
    <property type="term" value="C:clathrin coat"/>
    <property type="evidence" value="ECO:0007669"/>
    <property type="project" value="Ensembl"/>
</dbReference>
<dbReference type="GO" id="GO:0005769">
    <property type="term" value="C:early endosome"/>
    <property type="evidence" value="ECO:0007669"/>
    <property type="project" value="Ensembl"/>
</dbReference>
<dbReference type="GO" id="GO:0030139">
    <property type="term" value="C:endocytic vesicle"/>
    <property type="evidence" value="ECO:0000250"/>
    <property type="project" value="UniProtKB"/>
</dbReference>
<dbReference type="GO" id="GO:0005768">
    <property type="term" value="C:endosome"/>
    <property type="evidence" value="ECO:0000266"/>
    <property type="project" value="MGI"/>
</dbReference>
<dbReference type="GO" id="GO:0010008">
    <property type="term" value="C:endosome membrane"/>
    <property type="evidence" value="ECO:0007669"/>
    <property type="project" value="UniProtKB-SubCell"/>
</dbReference>
<dbReference type="GO" id="GO:0005615">
    <property type="term" value="C:extracellular space"/>
    <property type="evidence" value="ECO:0007669"/>
    <property type="project" value="Ensembl"/>
</dbReference>
<dbReference type="GO" id="GO:0000139">
    <property type="term" value="C:Golgi membrane"/>
    <property type="evidence" value="ECO:0007669"/>
    <property type="project" value="UniProtKB-SubCell"/>
</dbReference>
<dbReference type="GO" id="GO:0005770">
    <property type="term" value="C:late endosome"/>
    <property type="evidence" value="ECO:0000266"/>
    <property type="project" value="MGI"/>
</dbReference>
<dbReference type="GO" id="GO:0016020">
    <property type="term" value="C:membrane"/>
    <property type="evidence" value="ECO:0000314"/>
    <property type="project" value="MGI"/>
</dbReference>
<dbReference type="GO" id="GO:0005641">
    <property type="term" value="C:nuclear envelope lumen"/>
    <property type="evidence" value="ECO:0000314"/>
    <property type="project" value="MGI"/>
</dbReference>
<dbReference type="GO" id="GO:0005634">
    <property type="term" value="C:nucleus"/>
    <property type="evidence" value="ECO:0000314"/>
    <property type="project" value="MGI"/>
</dbReference>
<dbReference type="GO" id="GO:0048471">
    <property type="term" value="C:perinuclear region of cytoplasm"/>
    <property type="evidence" value="ECO:0007669"/>
    <property type="project" value="Ensembl"/>
</dbReference>
<dbReference type="GO" id="GO:0005802">
    <property type="term" value="C:trans-Golgi network"/>
    <property type="evidence" value="ECO:0007669"/>
    <property type="project" value="Ensembl"/>
</dbReference>
<dbReference type="GO" id="GO:0030140">
    <property type="term" value="C:trans-Golgi network transport vesicle"/>
    <property type="evidence" value="ECO:0000266"/>
    <property type="project" value="MGI"/>
</dbReference>
<dbReference type="GO" id="GO:0005537">
    <property type="term" value="F:D-mannose binding"/>
    <property type="evidence" value="ECO:0000314"/>
    <property type="project" value="MGI"/>
</dbReference>
<dbReference type="GO" id="GO:0019899">
    <property type="term" value="F:enzyme binding"/>
    <property type="evidence" value="ECO:0007669"/>
    <property type="project" value="Ensembl"/>
</dbReference>
<dbReference type="GO" id="GO:0001965">
    <property type="term" value="F:G-protein alpha-subunit binding"/>
    <property type="evidence" value="ECO:0007669"/>
    <property type="project" value="Ensembl"/>
</dbReference>
<dbReference type="GO" id="GO:0042802">
    <property type="term" value="F:identical protein binding"/>
    <property type="evidence" value="ECO:0007669"/>
    <property type="project" value="Ensembl"/>
</dbReference>
<dbReference type="GO" id="GO:0005520">
    <property type="term" value="F:insulin-like growth factor binding"/>
    <property type="evidence" value="ECO:0000353"/>
    <property type="project" value="MGI"/>
</dbReference>
<dbReference type="GO" id="GO:0031995">
    <property type="term" value="F:insulin-like growth factor II binding"/>
    <property type="evidence" value="ECO:0007669"/>
    <property type="project" value="Ensembl"/>
</dbReference>
<dbReference type="GO" id="GO:0051219">
    <property type="term" value="F:phosphoprotein binding"/>
    <property type="evidence" value="ECO:0000250"/>
    <property type="project" value="UniProtKB"/>
</dbReference>
<dbReference type="GO" id="GO:0001972">
    <property type="term" value="F:retinoic acid binding"/>
    <property type="evidence" value="ECO:0007669"/>
    <property type="project" value="Ensembl"/>
</dbReference>
<dbReference type="GO" id="GO:1905394">
    <property type="term" value="F:retromer complex binding"/>
    <property type="evidence" value="ECO:0007669"/>
    <property type="project" value="Ensembl"/>
</dbReference>
<dbReference type="GO" id="GO:0038023">
    <property type="term" value="F:signaling receptor activity"/>
    <property type="evidence" value="ECO:0007669"/>
    <property type="project" value="InterPro"/>
</dbReference>
<dbReference type="GO" id="GO:0031100">
    <property type="term" value="P:animal organ regeneration"/>
    <property type="evidence" value="ECO:0007669"/>
    <property type="project" value="Ensembl"/>
</dbReference>
<dbReference type="GO" id="GO:0007186">
    <property type="term" value="P:G protein-coupled receptor signaling pathway"/>
    <property type="evidence" value="ECO:0007669"/>
    <property type="project" value="Ensembl"/>
</dbReference>
<dbReference type="GO" id="GO:0001889">
    <property type="term" value="P:liver development"/>
    <property type="evidence" value="ECO:0007669"/>
    <property type="project" value="Ensembl"/>
</dbReference>
<dbReference type="GO" id="GO:0007041">
    <property type="term" value="P:lysosomal transport"/>
    <property type="evidence" value="ECO:0007669"/>
    <property type="project" value="InterPro"/>
</dbReference>
<dbReference type="GO" id="GO:0044794">
    <property type="term" value="P:positive regulation by host of viral process"/>
    <property type="evidence" value="ECO:0007669"/>
    <property type="project" value="Ensembl"/>
</dbReference>
<dbReference type="GO" id="GO:0043065">
    <property type="term" value="P:positive regulation of apoptotic process"/>
    <property type="evidence" value="ECO:0007669"/>
    <property type="project" value="Ensembl"/>
</dbReference>
<dbReference type="GO" id="GO:0009791">
    <property type="term" value="P:post-embryonic development"/>
    <property type="evidence" value="ECO:0007669"/>
    <property type="project" value="Ensembl"/>
</dbReference>
<dbReference type="GO" id="GO:0032526">
    <property type="term" value="P:response to retinoic acid"/>
    <property type="evidence" value="ECO:0007669"/>
    <property type="project" value="Ensembl"/>
</dbReference>
<dbReference type="GO" id="GO:1904772">
    <property type="term" value="P:response to tetrachloromethane"/>
    <property type="evidence" value="ECO:0007669"/>
    <property type="project" value="Ensembl"/>
</dbReference>
<dbReference type="GO" id="GO:0007283">
    <property type="term" value="P:spermatogenesis"/>
    <property type="evidence" value="ECO:0007669"/>
    <property type="project" value="Ensembl"/>
</dbReference>
<dbReference type="CDD" id="cd00062">
    <property type="entry name" value="FN2"/>
    <property type="match status" value="1"/>
</dbReference>
<dbReference type="FunFam" id="2.10.10.10:FF:000006">
    <property type="entry name" value="Insulin-like growth factor 2 receptor"/>
    <property type="match status" value="1"/>
</dbReference>
<dbReference type="FunFam" id="2.70.130.10:FF:000004">
    <property type="entry name" value="Insulin-like growth factor 2 receptor"/>
    <property type="match status" value="1"/>
</dbReference>
<dbReference type="FunFam" id="2.70.130.10:FF:000005">
    <property type="entry name" value="Insulin-like growth factor 2 receptor"/>
    <property type="match status" value="1"/>
</dbReference>
<dbReference type="FunFam" id="2.70.130.10:FF:000006">
    <property type="entry name" value="Insulin-like growth factor 2 receptor"/>
    <property type="match status" value="1"/>
</dbReference>
<dbReference type="FunFam" id="2.70.130.10:FF:000007">
    <property type="entry name" value="Insulin-like growth factor 2 receptor"/>
    <property type="match status" value="1"/>
</dbReference>
<dbReference type="FunFam" id="2.70.130.10:FF:000009">
    <property type="entry name" value="Insulin-like growth factor 2 receptor"/>
    <property type="match status" value="1"/>
</dbReference>
<dbReference type="FunFam" id="2.70.130.10:FF:000010">
    <property type="entry name" value="Insulin-like growth factor 2 receptor"/>
    <property type="match status" value="1"/>
</dbReference>
<dbReference type="FunFam" id="2.70.130.10:FF:000011">
    <property type="entry name" value="Insulin-like growth factor 2 receptor"/>
    <property type="match status" value="1"/>
</dbReference>
<dbReference type="FunFam" id="2.70.130.10:FF:000012">
    <property type="entry name" value="Insulin-like growth factor 2 receptor"/>
    <property type="match status" value="1"/>
</dbReference>
<dbReference type="FunFam" id="2.70.130.10:FF:000013">
    <property type="entry name" value="Insulin-like growth factor 2 receptor"/>
    <property type="match status" value="1"/>
</dbReference>
<dbReference type="FunFam" id="2.70.130.10:FF:000015">
    <property type="entry name" value="Insulin-like growth factor 2 receptor"/>
    <property type="match status" value="1"/>
</dbReference>
<dbReference type="FunFam" id="2.70.130.10:FF:000016">
    <property type="entry name" value="Insulin-like growth factor 2 receptor"/>
    <property type="match status" value="1"/>
</dbReference>
<dbReference type="FunFam" id="2.70.130.10:FF:000017">
    <property type="entry name" value="Insulin-like growth factor 2 receptor"/>
    <property type="match status" value="1"/>
</dbReference>
<dbReference type="FunFam" id="2.70.130.10:FF:000019">
    <property type="entry name" value="Insulin-like growth factor 2 receptor"/>
    <property type="match status" value="1"/>
</dbReference>
<dbReference type="FunFam" id="2.70.130.10:FF:000020">
    <property type="entry name" value="Insulin-like growth factor 2 receptor"/>
    <property type="match status" value="1"/>
</dbReference>
<dbReference type="FunFam" id="2.70.130.10:FF:000022">
    <property type="entry name" value="Insulin-like growth factor 2 receptor"/>
    <property type="match status" value="1"/>
</dbReference>
<dbReference type="Gene3D" id="2.10.10.10">
    <property type="entry name" value="Fibronectin, type II, collagen-binding"/>
    <property type="match status" value="1"/>
</dbReference>
<dbReference type="Gene3D" id="2.70.130.10">
    <property type="entry name" value="Mannose-6-phosphate receptor binding domain"/>
    <property type="match status" value="15"/>
</dbReference>
<dbReference type="InterPro" id="IPR000479">
    <property type="entry name" value="CIMR_rpt"/>
</dbReference>
<dbReference type="InterPro" id="IPR000562">
    <property type="entry name" value="FN_type2_dom"/>
</dbReference>
<dbReference type="InterPro" id="IPR036943">
    <property type="entry name" value="FN_type2_sf"/>
</dbReference>
<dbReference type="InterPro" id="IPR013806">
    <property type="entry name" value="Kringle-like"/>
</dbReference>
<dbReference type="InterPro" id="IPR009011">
    <property type="entry name" value="Man6P_isomerase_rcpt-bd_dom_sf"/>
</dbReference>
<dbReference type="InterPro" id="IPR044865">
    <property type="entry name" value="MRH_dom"/>
</dbReference>
<dbReference type="PANTHER" id="PTHR15071:SF0">
    <property type="entry name" value="MANNOSE 6-PHOSPHATE RECEPTOR-LIKE PROTEIN 1"/>
    <property type="match status" value="1"/>
</dbReference>
<dbReference type="PANTHER" id="PTHR15071">
    <property type="entry name" value="MANNOSE-6-PHOSPHATE RECEPTOR FAMILY MEMBER"/>
    <property type="match status" value="1"/>
</dbReference>
<dbReference type="Pfam" id="PF00878">
    <property type="entry name" value="CIMR"/>
    <property type="match status" value="14"/>
</dbReference>
<dbReference type="Pfam" id="PF00040">
    <property type="entry name" value="fn2"/>
    <property type="match status" value="1"/>
</dbReference>
<dbReference type="PRINTS" id="PR00013">
    <property type="entry name" value="FNTYPEII"/>
</dbReference>
<dbReference type="SMART" id="SM01404">
    <property type="entry name" value="CIMR"/>
    <property type="match status" value="14"/>
</dbReference>
<dbReference type="SMART" id="SM00059">
    <property type="entry name" value="FN2"/>
    <property type="match status" value="1"/>
</dbReference>
<dbReference type="SUPFAM" id="SSF57440">
    <property type="entry name" value="Kringle-like"/>
    <property type="match status" value="1"/>
</dbReference>
<dbReference type="SUPFAM" id="SSF50911">
    <property type="entry name" value="Mannose 6-phosphate receptor domain"/>
    <property type="match status" value="15"/>
</dbReference>
<dbReference type="PROSITE" id="PS00023">
    <property type="entry name" value="FN2_1"/>
    <property type="match status" value="1"/>
</dbReference>
<dbReference type="PROSITE" id="PS51092">
    <property type="entry name" value="FN2_2"/>
    <property type="match status" value="1"/>
</dbReference>
<dbReference type="PROSITE" id="PS51914">
    <property type="entry name" value="MRH"/>
    <property type="match status" value="15"/>
</dbReference>
<gene>
    <name type="primary">Igf2r</name>
</gene>
<organism>
    <name type="scientific">Mus musculus</name>
    <name type="common">Mouse</name>
    <dbReference type="NCBI Taxonomy" id="10090"/>
    <lineage>
        <taxon>Eukaryota</taxon>
        <taxon>Metazoa</taxon>
        <taxon>Chordata</taxon>
        <taxon>Craniata</taxon>
        <taxon>Vertebrata</taxon>
        <taxon>Euteleostomi</taxon>
        <taxon>Mammalia</taxon>
        <taxon>Eutheria</taxon>
        <taxon>Euarchontoglires</taxon>
        <taxon>Glires</taxon>
        <taxon>Rodentia</taxon>
        <taxon>Myomorpha</taxon>
        <taxon>Muroidea</taxon>
        <taxon>Muridae</taxon>
        <taxon>Murinae</taxon>
        <taxon>Mus</taxon>
        <taxon>Mus</taxon>
    </lineage>
</organism>
<accession>Q07113</accession>
<accession>Q61822</accession>
<accession>Q6LED1</accession>
<evidence type="ECO:0000250" key="1"/>
<evidence type="ECO:0000250" key="2">
    <source>
        <dbReference type="UniProtKB" id="P11717"/>
    </source>
</evidence>
<evidence type="ECO:0000255" key="3"/>
<evidence type="ECO:0000255" key="4">
    <source>
        <dbReference type="PROSITE-ProRule" id="PRU00479"/>
    </source>
</evidence>
<evidence type="ECO:0000255" key="5">
    <source>
        <dbReference type="PROSITE-ProRule" id="PRU01262"/>
    </source>
</evidence>
<evidence type="ECO:0000256" key="6">
    <source>
        <dbReference type="SAM" id="MobiDB-lite"/>
    </source>
</evidence>
<evidence type="ECO:0000269" key="7">
    <source>
    </source>
</evidence>
<evidence type="ECO:0000269" key="8">
    <source>
    </source>
</evidence>
<evidence type="ECO:0000305" key="9"/>
<evidence type="ECO:0007744" key="10">
    <source>
    </source>
</evidence>
<evidence type="ECO:0007744" key="11">
    <source>
    </source>
</evidence>
<evidence type="ECO:0007744" key="12">
    <source>
    </source>
</evidence>
<evidence type="ECO:0007744" key="13">
    <source>
    </source>
</evidence>
<evidence type="ECO:0007744" key="14">
    <source>
    </source>
</evidence>
<evidence type="ECO:0007744" key="15">
    <source>
    </source>
</evidence>
<proteinExistence type="evidence at protein level"/>
<name>MPRI_MOUSE</name>
<comment type="function">
    <text evidence="2">Mediates the transport of phosphorylated lysosomal enzymes from the Golgi complex and the cell surface to lysosomes. Lysosomal enzymes bearing phosphomannosyl residues bind specifically to mannose-6-phosphate receptors in the Golgi apparatus and the resulting receptor-ligand complex is transported to an acidic prelysosomal compartment where the low pH mediates the dissociation of the complex. The receptor is then recycled back to the Golgi for another round of trafficking through its binding to the retromer. This receptor also binds IGF2. Acts as a positive regulator of T-cell coactivation by binding DPP4.</text>
</comment>
<comment type="subunit">
    <text evidence="1 2">Binds HA-I and HA-II plasma membrane adapters (By similarity). Interacts with DPP4; the interaction is direct. Binds GGA1, GGA2 and GGA3 (By similarity). Interacts with the heterotrimeric retromer cargo-selective complex (CSC), formed by VPS26 (VPS26A or VPS26B), VPS29 and VPS35; which is involved in retrograde trafficking of the receptor from endosomes to the Golgi apparatus (By similarity).</text>
</comment>
<comment type="interaction">
    <interactant intactId="EBI-2891155">
        <id>Q07113</id>
    </interactant>
    <interactant intactId="EBI-3862093">
        <id>Q3TBT3</id>
        <label>Sting1</label>
    </interactant>
    <organismsDiffer>false</organismsDiffer>
    <experiments>2</experiments>
</comment>
<comment type="subcellular location">
    <subcellularLocation>
        <location evidence="2">Golgi apparatus membrane</location>
        <topology evidence="2">Single-pass type I membrane protein</topology>
    </subcellularLocation>
    <subcellularLocation>
        <location evidence="2">Endosome membrane</location>
        <topology evidence="2">Single-pass type I membrane protein</topology>
    </subcellularLocation>
    <text evidence="2">Mainly localized in the Golgi at steady state and not detectable in lysosome. Colocalized with DPP4 in internalized cytoplasmic vesicles adjacent to the cell surface.</text>
</comment>
<comment type="domain">
    <text>Contains 15 repeating units of approximately 147 AA harboring four disulfide bonds each. The most highly conserved region within the repeat consists of a stretch of 13 AA that contains cysteines at both ends.</text>
</comment>
<comment type="PTM">
    <text evidence="2">Palmitoylated. Undergoes cysteine S-palmitoylation which promotes interaction with the retromer cargo-selective complex which mediates its retrograde trafficking to the Golgi apparatus.</text>
</comment>
<comment type="similarity">
    <text evidence="9">Belongs to the MRL1/IGF2R family.</text>
</comment>
<sequence length="2483" mass="273815">MRAVQLGPVPSGPRVALLPPLLLLLLLAAAGSAQAQAVDLDALCSYTWEAVDSKNNAVYKINVCGNVGISSCGPTSAICMCDLKTENCRSVGDSLLRSSARSLLEFNTTMGCQPSDSQHRIQTSITFLCGKTLGTPEFVTATDCVHYFEWRTTAACKKDIFKADKEVPCYAFDDKLQKHDLNPLIKLNGGYLVDDSDPDTSLFINVCRDIDSLRDPSTQLRVCPAGTAACLLKGNQAFDVGRPKEGLKLLSKDRLVLTYVKEEGEKPDFCNGHSPAVTVTFVCPSERREGTIPKLTAKSNCRYEVEWITEYACHRDYLQSESCSLSSEQHDITIDLSPLAQYGGSPYVSDGREYTFFINVCGDTKVSLCNNKEAAVCQEKKADSTQVKIAGRHQNQTLRYSDGDLTLIYSGGDECSSGFQRMSVINFECNKTAGKDGRGEPVFTGEVDCTYFFTWDTKYACIKEKEDLLCGAINGKKRYDLSVLARHSESEQNWEAVDGSQAESEKYFFINVCHRVLQEGKARNCPEDAAVCAVDKNGSKNLGKFVSSPTKEKGHIQLSYTDGDDCGSDKKISTNITLVCKPGDLESAPVLRAARSDGCFYEFEWHTAAACVLSKTEGENCTVLDAQAGFSFDLSLLTKKNGAYKVETEKYDFYINVCGPVSMDPCQSNSGACQVAKSGKSWNLGLSSTKLTYYDGMIQLSYRNGTPYNNEKHTPRATLITFLCDRDAGVGFPEYQEEDNSTYNFRWYTSYACPEEPLECMVTDPSMMEQYDLSSLVKSEGGSGGNWYAMENSREHVTRRKYYLNVCRPLNPVPGCDRYASACQMKYENHEGSLAETVSISNLGVAKIGPVVEESGSLLLEYVNGSACTTSDGQLTTYSTRIHLVCGRGFMNSHPIFTFNWECVVSFLWNTEAACPIQTITETDQACSIRDPSSGFVFNLSPLNDSAQGHVVLGIGKTFVFNICGAMPACGTVAGKPAYGCEAETQIEDIKDLRPQRPVGMERSLQLSAEGFLTLTYKGSSPSDRGTAFIIRFICNDDIYPGAPKFLHQDIDSTRGIRNTYFEFETALACTPSLVDCQVTDPAGNEYDLSALSMVRKPWTAVDTSAYGKRRHFYLSVCNPLPYIPGCHGIALGSCMVSEDNSFNLGVVQISPQATGNGSLSILYVNGDRCGDQRFSTRIVFECAQTSGSPMFQFVNNCEYVFVWRTVEACPVIREEGDNCQVKDPRHGNLYDLKPLGLNDTIVSVGEYTYYLRVCGKLSSDVCSAHDGSKAVSSCQEKKGPQGFQKVAGLLSQKLTFENGLLKMNYTGGDTCHKVYQRSTTIYFYCDRTTQKPVFLKETSDCSYMFEWRTQYACPPFNVTECSVQDAAGNSIDLSSLSRYSDNWEAVTRTGATEHYLINVCKSLSPHAGTEPCPPEAAVCLLNGSKPVNLGKVRDGPQWTDGVTVLQYVDGDLCPDKIRRRSTIIRFTCSDNQVNSRPLFISAVQDCEYTFSWPTPSACPVKSNTHDDCQVTNPSTGHLFDLSSLSGRAGINASYSEKGLVFMSICEENENCGPGVGACFGQTRISVGKASKRLSYKDQVLQLVYENGSPCPSLSDLRYKSVISFVCRPEAGPTNRPMLISLDKQTCTLFFSWHTPLACEQATECTVRNGSSIIDLSPLIHRTGGYEAYDESEDDTSDTTPDFYINICQPLNPMHGVPCPAGASVCKVPVDGPPIDIGRVTGPPIFNPVANEVYLNFESSTHCLADRYMNYTSLITFHCKRGVSMGTPKLIRTNDCDFVFEWETPIVCPDEVKTQGCAVTDEQLLYSFNLTSLSTSTFKVTRDARTYSIGVCTAAAGLGQEGCKDGGVCLLSGNKGASFGRLASMQLDYRHQDEAVILSYVNGDPCPPETDDGEPCVFPFIYKGKSYDECVLEGRAKLWCSKTANYDRDHEWGFCRQTNSYRMSAIIFTCDESEDIGRPQVFSEDRGCEVTFEWKTKVVCPPKKMECKFVQKHKTYDLRLLSSLTGSWDFVHEGNSYFINLCQRVYKGPLDCSERASICKKSATGQVQVLGLVHTQKLEVIDETVIVTYSKGYPCGGNKTASSVIELTCAKTVGRPAFKRFDSVSCTYYFYWYSRAACAVRPQEVTMVNGTLTNPVTGKSFSLGEIYFKLFSASGDMRTNGDNYLYEIQLSSITSSSYPACAGANICQVKPNDQHFSRKVGTSDMTKYYVQDGDLDVVFTSSSKCGKDKTKSVSSTIFFHCDPLVKDGIPEFSHETADCQYLFSWYTSAVCPLGVDFEDESAGPEYKGLSERSQAVGAVLSLLLVALTGCLLALLLHKKERRETVINKLTSCCRRSSGVSYKYSKVSKEEETDENETEWLMEEIQVPAPRLGKDGQENGHITTKAVKAEALSSLHGDDQDSEDEVLTVPEVKVHSGRGAEVESSQPLRNPQRKVLKEREGERLGLVRGEKARKGKFRPGQRKPTAPAKLVSFHDDSDEDLLHI</sequence>
<protein>
    <recommendedName>
        <fullName>Cation-independent mannose-6-phosphate receptor</fullName>
        <shortName>CI Man-6-P receptor</shortName>
        <shortName>CI-MPR</shortName>
        <shortName>M6PR</shortName>
    </recommendedName>
    <alternativeName>
        <fullName>300 kDa mannose 6-phosphate receptor</fullName>
        <shortName>MPR 300</shortName>
    </alternativeName>
    <alternativeName>
        <fullName>Insulin-like growth factor 2 receptor</fullName>
    </alternativeName>
    <alternativeName>
        <fullName>Insulin-like growth factor II receptor</fullName>
        <shortName>IGF-II receptor</shortName>
    </alternativeName>
    <alternativeName>
        <fullName>M6P/IGF2 receptor</fullName>
        <shortName>M6P/IGF2R</shortName>
    </alternativeName>
    <cdAntigenName>CD222</cdAntigenName>
</protein>
<feature type="signal peptide" evidence="3">
    <location>
        <begin position="1"/>
        <end position="35"/>
    </location>
</feature>
<feature type="chain" id="PRO_0000019230" description="Cation-independent mannose-6-phosphate receptor">
    <location>
        <begin position="36"/>
        <end position="2483"/>
    </location>
</feature>
<feature type="topological domain" description="Lumenal" evidence="3">
    <location>
        <begin position="36"/>
        <end position="2295"/>
    </location>
</feature>
<feature type="transmembrane region" description="Helical" evidence="3">
    <location>
        <begin position="2296"/>
        <end position="2316"/>
    </location>
</feature>
<feature type="topological domain" description="Cytoplasmic" evidence="3">
    <location>
        <begin position="2317"/>
        <end position="2483"/>
    </location>
</feature>
<feature type="domain" description="MRH 1" evidence="5">
    <location>
        <begin position="42"/>
        <end position="158"/>
    </location>
</feature>
<feature type="domain" description="MRH 2" evidence="5">
    <location>
        <begin position="167"/>
        <end position="315"/>
    </location>
</feature>
<feature type="domain" description="MRH 3" evidence="5">
    <location>
        <begin position="321"/>
        <end position="463"/>
    </location>
</feature>
<feature type="domain" description="MRH 4" evidence="5">
    <location>
        <begin position="468"/>
        <end position="613"/>
    </location>
</feature>
<feature type="domain" description="MRH 5" evidence="5">
    <location>
        <begin position="619"/>
        <end position="755"/>
    </location>
</feature>
<feature type="domain" description="MRH 6" evidence="5">
    <location>
        <begin position="758"/>
        <end position="917"/>
    </location>
</feature>
<feature type="domain" description="MRH 7" evidence="5">
    <location>
        <begin position="925"/>
        <end position="1072"/>
    </location>
</feature>
<feature type="domain" description="MRH 8" evidence="5">
    <location>
        <begin position="1075"/>
        <end position="1212"/>
    </location>
</feature>
<feature type="domain" description="MRH 9" evidence="5">
    <location>
        <begin position="1218"/>
        <end position="1356"/>
    </location>
</feature>
<feature type="domain" description="MRH 10" evidence="5">
    <location>
        <begin position="1360"/>
        <end position="1501"/>
    </location>
</feature>
<feature type="domain" description="MRH 11" evidence="5">
    <location>
        <begin position="1507"/>
        <end position="1641"/>
    </location>
</feature>
<feature type="domain" description="MRH 12" evidence="5">
    <location>
        <begin position="1643"/>
        <end position="1790"/>
    </location>
</feature>
<feature type="domain" description="MRH 13" evidence="5">
    <location>
        <begin position="1795"/>
        <end position="1982"/>
    </location>
</feature>
<feature type="domain" description="Fibronectin type-II" evidence="4">
    <location>
        <begin position="1891"/>
        <end position="1937"/>
    </location>
</feature>
<feature type="domain" description="MRH 14" evidence="5">
    <location>
        <begin position="1985"/>
        <end position="2120"/>
    </location>
</feature>
<feature type="domain" description="MRH 15" evidence="5">
    <location>
        <begin position="2128"/>
        <end position="2273"/>
    </location>
</feature>
<feature type="region of interest" description="Disordered" evidence="6">
    <location>
        <begin position="2415"/>
        <end position="2483"/>
    </location>
</feature>
<feature type="compositionally biased region" description="Basic and acidic residues" evidence="6">
    <location>
        <begin position="2434"/>
        <end position="2451"/>
    </location>
</feature>
<feature type="compositionally biased region" description="Basic and acidic residues" evidence="6">
    <location>
        <begin position="2471"/>
        <end position="2483"/>
    </location>
</feature>
<feature type="modified residue" description="N6-acetyllysine" evidence="2">
    <location>
        <position position="2342"/>
    </location>
</feature>
<feature type="modified residue" description="Phosphoserine" evidence="10 12 14">
    <location>
        <position position="2401"/>
    </location>
</feature>
<feature type="modified residue" description="Omega-N-methylarginine" evidence="15">
    <location>
        <position position="2417"/>
    </location>
</feature>
<feature type="modified residue" description="Phosphoserine" evidence="13 14">
    <location>
        <position position="2471"/>
    </location>
</feature>
<feature type="modified residue" description="Phosphoserine" evidence="10 11 12 13 14">
    <location>
        <position position="2476"/>
    </location>
</feature>
<feature type="glycosylation site" description="N-linked (GlcNAc...) asparagine" evidence="3">
    <location>
        <position position="107"/>
    </location>
</feature>
<feature type="glycosylation site" description="N-linked (GlcNAc...) asparagine" evidence="3">
    <location>
        <position position="395"/>
    </location>
</feature>
<feature type="glycosylation site" description="N-linked (GlcNAc...) asparagine" evidence="3">
    <location>
        <position position="430"/>
    </location>
</feature>
<feature type="glycosylation site" description="N-linked (GlcNAc...) asparagine" evidence="3">
    <location>
        <position position="537"/>
    </location>
</feature>
<feature type="glycosylation site" description="N-linked (GlcNAc...) asparagine" evidence="3">
    <location>
        <position position="575"/>
    </location>
</feature>
<feature type="glycosylation site" description="N-linked (GlcNAc...) asparagine" evidence="3">
    <location>
        <position position="620"/>
    </location>
</feature>
<feature type="glycosylation site" description="N-linked (GlcNAc...) asparagine" evidence="7">
    <location>
        <position position="740"/>
    </location>
</feature>
<feature type="glycosylation site" description="N-linked (GlcNAc...) asparagine" evidence="3">
    <location>
        <position position="864"/>
    </location>
</feature>
<feature type="glycosylation site" description="N-linked (GlcNAc...) asparagine" evidence="3">
    <location>
        <position position="944"/>
    </location>
</feature>
<feature type="glycosylation site" description="N-linked (GlcNAc...) asparagine" evidence="3">
    <location>
        <position position="1157"/>
    </location>
</feature>
<feature type="glycosylation site" description="N-linked (GlcNAc...) asparagine" evidence="3">
    <location>
        <position position="1239"/>
    </location>
</feature>
<feature type="glycosylation site" description="N-linked (GlcNAc...) asparagine" evidence="3">
    <location>
        <position position="1305"/>
    </location>
</feature>
<feature type="glycosylation site" description="N-linked (GlcNAc...) asparagine" evidence="3">
    <location>
        <position position="1358"/>
    </location>
</feature>
<feature type="glycosylation site" description="N-linked (GlcNAc...) asparagine" evidence="3">
    <location>
        <position position="1423"/>
    </location>
</feature>
<feature type="glycosylation site" description="N-linked (GlcNAc...) asparagine" evidence="7 8">
    <location>
        <position position="1532"/>
    </location>
</feature>
<feature type="glycosylation site" description="N-linked (GlcNAc...) asparagine" evidence="3">
    <location>
        <position position="1649"/>
    </location>
</feature>
<feature type="glycosylation site" description="N-linked (GlcNAc...) asparagine" evidence="7">
    <location>
        <position position="1750"/>
    </location>
</feature>
<feature type="glycosylation site" description="N-linked (GlcNAc...) asparagine" evidence="3">
    <location>
        <position position="1809"/>
    </location>
</feature>
<feature type="glycosylation site" description="N-linked (GlcNAc...) asparagine" evidence="3">
    <location>
        <position position="2078"/>
    </location>
</feature>
<feature type="glycosylation site" description="N-linked (GlcNAc...) asparagine" evidence="3">
    <location>
        <position position="2129"/>
    </location>
</feature>
<feature type="disulfide bond" evidence="5">
    <location>
        <begin position="44"/>
        <end position="64"/>
    </location>
</feature>
<feature type="disulfide bond" evidence="5">
    <location>
        <begin position="72"/>
        <end position="79"/>
    </location>
</feature>
<feature type="disulfide bond" evidence="5">
    <location>
        <begin position="112"/>
        <end position="144"/>
    </location>
</feature>
<feature type="disulfide bond" evidence="5">
    <location>
        <begin position="129"/>
        <end position="156"/>
    </location>
</feature>
<feature type="disulfide bond" evidence="5">
    <location>
        <begin position="169"/>
        <end position="207"/>
    </location>
</feature>
<feature type="disulfide bond" evidence="5">
    <location>
        <begin position="223"/>
        <end position="230"/>
    </location>
</feature>
<feature type="disulfide bond" evidence="5">
    <location>
        <begin position="270"/>
        <end position="301"/>
    </location>
</feature>
<feature type="disulfide bond" evidence="5">
    <location>
        <begin position="283"/>
        <end position="313"/>
    </location>
</feature>
<feature type="disulfide bond" evidence="5">
    <location>
        <begin position="323"/>
        <end position="361"/>
    </location>
</feature>
<feature type="disulfide bond" evidence="5">
    <location>
        <begin position="369"/>
        <end position="377"/>
    </location>
</feature>
<feature type="disulfide bond" evidence="5">
    <location>
        <begin position="415"/>
        <end position="449"/>
    </location>
</feature>
<feature type="disulfide bond" evidence="5">
    <location>
        <begin position="429"/>
        <end position="461"/>
    </location>
</feature>
<feature type="disulfide bond" evidence="5">
    <location>
        <begin position="470"/>
        <end position="513"/>
    </location>
</feature>
<feature type="disulfide bond" evidence="5">
    <location>
        <begin position="525"/>
        <end position="532"/>
    </location>
</feature>
<feature type="disulfide bond" evidence="5">
    <location>
        <begin position="566"/>
        <end position="599"/>
    </location>
</feature>
<feature type="disulfide bond" evidence="5">
    <location>
        <begin position="580"/>
        <end position="611"/>
    </location>
</feature>
<feature type="disulfide bond" evidence="5">
    <location>
        <begin position="621"/>
        <end position="658"/>
    </location>
</feature>
<feature type="disulfide bond" evidence="5">
    <location>
        <begin position="666"/>
        <end position="673"/>
    </location>
</feature>
<feature type="disulfide bond" evidence="5">
    <location>
        <begin position="724"/>
        <end position="753"/>
    </location>
</feature>
<feature type="disulfide bond" evidence="5">
    <location>
        <begin position="760"/>
        <end position="807"/>
    </location>
</feature>
<feature type="disulfide bond" evidence="5">
    <location>
        <begin position="816"/>
        <end position="823"/>
    </location>
</feature>
<feature type="disulfide bond" evidence="5">
    <location>
        <begin position="868"/>
        <end position="903"/>
    </location>
</feature>
<feature type="disulfide bond" evidence="5">
    <location>
        <begin position="886"/>
        <end position="915"/>
    </location>
</feature>
<feature type="disulfide bond" evidence="5">
    <location>
        <begin position="927"/>
        <end position="964"/>
    </location>
</feature>
<feature type="disulfide bond" evidence="5">
    <location>
        <begin position="970"/>
        <end position="981"/>
    </location>
</feature>
<feature type="disulfide bond" evidence="5">
    <location>
        <begin position="1035"/>
        <end position="1070"/>
    </location>
</feature>
<feature type="disulfide bond" evidence="5">
    <location>
        <begin position="1077"/>
        <end position="1118"/>
    </location>
</feature>
<feature type="disulfide bond" evidence="5">
    <location>
        <begin position="1127"/>
        <end position="1135"/>
    </location>
</feature>
<feature type="disulfide bond" evidence="5">
    <location>
        <begin position="1170"/>
        <end position="1198"/>
    </location>
</feature>
<feature type="disulfide bond" evidence="5">
    <location>
        <begin position="1183"/>
        <end position="1210"/>
    </location>
</feature>
<feature type="disulfide bond" evidence="5">
    <location>
        <begin position="1220"/>
        <end position="1255"/>
    </location>
</feature>
<feature type="disulfide bond" evidence="5">
    <location>
        <begin position="1263"/>
        <end position="1275"/>
    </location>
</feature>
<feature type="disulfide bond" evidence="5">
    <location>
        <begin position="1312"/>
        <end position="1342"/>
    </location>
</feature>
<feature type="disulfide bond" evidence="5">
    <location>
        <begin position="1326"/>
        <end position="1354"/>
    </location>
</feature>
<feature type="disulfide bond" evidence="5">
    <location>
        <begin position="1362"/>
        <end position="1401"/>
    </location>
</feature>
<feature type="disulfide bond" evidence="5">
    <location>
        <begin position="1413"/>
        <end position="1420"/>
    </location>
</feature>
<feature type="disulfide bond" evidence="5">
    <location>
        <begin position="1454"/>
        <end position="1487"/>
    </location>
</feature>
<feature type="disulfide bond" evidence="5">
    <location>
        <begin position="1469"/>
        <end position="1499"/>
    </location>
</feature>
<feature type="disulfide bond" evidence="5">
    <location>
        <begin position="1509"/>
        <end position="1546"/>
    </location>
</feature>
<feature type="disulfide bond" evidence="5">
    <location>
        <begin position="1552"/>
        <end position="1559"/>
    </location>
</feature>
<feature type="disulfide bond" evidence="5">
    <location>
        <begin position="1591"/>
        <end position="1627"/>
    </location>
</feature>
<feature type="disulfide bond" evidence="5">
    <location>
        <begin position="1607"/>
        <end position="1639"/>
    </location>
</feature>
<feature type="disulfide bond" evidence="5">
    <location>
        <begin position="1645"/>
        <end position="1688"/>
    </location>
</feature>
<feature type="disulfide bond" evidence="5">
    <location>
        <begin position="1699"/>
        <end position="1706"/>
    </location>
</feature>
<feature type="disulfide bond" evidence="5">
    <location>
        <begin position="1743"/>
        <end position="1776"/>
    </location>
</feature>
<feature type="disulfide bond" evidence="5">
    <location>
        <begin position="1759"/>
        <end position="1788"/>
    </location>
</feature>
<feature type="disulfide bond" evidence="5">
    <location>
        <begin position="1797"/>
        <end position="1832"/>
    </location>
</feature>
<feature type="disulfide bond" evidence="5">
    <location>
        <begin position="1843"/>
        <end position="1849"/>
    </location>
</feature>
<feature type="disulfide bond" evidence="5">
    <location>
        <begin position="1886"/>
        <end position="1968"/>
    </location>
</feature>
<feature type="disulfide bond" evidence="4">
    <location>
        <begin position="1896"/>
        <end position="1920"/>
    </location>
</feature>
<feature type="disulfide bond" evidence="4">
    <location>
        <begin position="1910"/>
        <end position="1935"/>
    </location>
</feature>
<feature type="disulfide bond" evidence="5">
    <location>
        <begin position="1950"/>
        <end position="1980"/>
    </location>
</feature>
<feature type="disulfide bond" evidence="5">
    <location>
        <begin position="1987"/>
        <end position="2022"/>
    </location>
</feature>
<feature type="disulfide bond" evidence="5">
    <location>
        <begin position="2032"/>
        <end position="2039"/>
    </location>
</feature>
<feature type="disulfide bond" evidence="5">
    <location>
        <begin position="2075"/>
        <end position="2106"/>
    </location>
</feature>
<feature type="disulfide bond" evidence="5">
    <location>
        <begin position="2089"/>
        <end position="2118"/>
    </location>
</feature>
<feature type="disulfide bond" evidence="5">
    <location>
        <begin position="2181"/>
        <end position="2187"/>
    </location>
</feature>
<feature type="disulfide bond" evidence="5">
    <location>
        <begin position="2225"/>
        <end position="2259"/>
    </location>
</feature>
<feature type="disulfide bond" evidence="5">
    <location>
        <begin position="2241"/>
        <end position="2271"/>
    </location>
</feature>
<feature type="sequence conflict" description="In Ref. 2." evidence="9" ref="2">
    <original>PS</original>
    <variation>RP</variation>
    <location>
        <begin position="10"/>
        <end position="11"/>
    </location>
</feature>
<feature type="sequence conflict" description="In Ref. 2." evidence="9" ref="2">
    <location>
        <position position="13"/>
    </location>
</feature>
<feature type="sequence conflict" description="In Ref. 2; AAA19568." evidence="9" ref="2">
    <original>D</original>
    <variation>V</variation>
    <location>
        <position position="209"/>
    </location>
</feature>
<feature type="sequence conflict" description="In Ref. 2." evidence="9" ref="2">
    <original>DT</original>
    <variation>VS</variation>
    <location>
        <begin position="456"/>
        <end position="457"/>
    </location>
</feature>
<feature type="sequence conflict" description="In Ref. 6; CAA42940." evidence="9" ref="6">
    <original>TCTLFF</original>
    <variation>GSTFFS</variation>
    <location>
        <begin position="1626"/>
        <end position="1631"/>
    </location>
</feature>
<feature type="sequence conflict" description="In Ref. 6; CAA42940." evidence="9" ref="6">
    <original>MH</original>
    <variation>TC</variation>
    <location>
        <begin position="1694"/>
        <end position="1695"/>
    </location>
</feature>
<feature type="sequence conflict" description="In Ref. 6; CAA42940." evidence="9" ref="6">
    <original>C</original>
    <variation>R</variation>
    <location>
        <position position="1699"/>
    </location>
</feature>
<feature type="sequence conflict" description="In Ref. 2; AAA19568." evidence="9" ref="2">
    <original>C</original>
    <variation>Y</variation>
    <location>
        <position position="1759"/>
    </location>
</feature>
<feature type="sequence conflict" description="In Ref. 6; CAA42940." evidence="9" ref="6">
    <original>G</original>
    <variation>V</variation>
    <location>
        <position position="2028"/>
    </location>
</feature>
<feature type="sequence conflict" description="In Ref. 6; CAA42940." evidence="9" ref="6">
    <original>C</original>
    <variation>S</variation>
    <location>
        <position position="2032"/>
    </location>
</feature>
<reference key="1">
    <citation type="journal article" date="1994" name="Genomics">
        <title>The mouse insulin-like growth factor II/cation-independent mannose 6-phosphate (IGF-II/MPR) receptor gene: molecular cloning and genomic organization.</title>
        <authorList>
            <person name="Szebenyi G."/>
            <person name="Rotwein P."/>
        </authorList>
    </citation>
    <scope>NUCLEOTIDE SEQUENCE [GENOMIC DNA]</scope>
</reference>
<reference key="2">
    <citation type="journal article" date="1994" name="Gene">
        <title>Cloning and sequencing of cDNAs encoding the full-length mouse mannose 6-phosphate/insulin-like growth factor II receptor.</title>
        <authorList>
            <person name="Ludwig T."/>
            <person name="Tenscher K."/>
            <person name="Remmler J."/>
            <person name="Hoflack B."/>
            <person name="Lobel P."/>
        </authorList>
    </citation>
    <scope>NUCLEOTIDE SEQUENCE [MRNA]</scope>
    <source>
        <strain>C57BL/6 X CBA</strain>
        <tissue>Liver</tissue>
    </source>
</reference>
<reference key="3">
    <citation type="journal article" date="1993" name="Cell">
        <title>Maternal-specific methylation of the imprinted mouse Igf2r locus identifies the expressed locus as carrying the imprinting signal.</title>
        <authorList>
            <person name="Stoger R."/>
            <person name="Kubicka P."/>
            <person name="Liu C.G."/>
            <person name="Kafri T."/>
            <person name="Razin A."/>
            <person name="Cedar H."/>
            <person name="Barlow D.P."/>
        </authorList>
    </citation>
    <scope>NUCLEOTIDE SEQUENCE [GENOMIC DNA] OF 1-44 AND 93-106</scope>
    <source>
        <strain>129</strain>
        <strain>C57BL/6J</strain>
    </source>
</reference>
<reference key="4">
    <citation type="journal article" date="1995" name="Mol. Endocrinol.">
        <title>Control of insulin-like growth factor-II/mannose 6-phosphate receptor gene transcription by proximal promoter elements.</title>
        <authorList>
            <person name="Liu Z."/>
            <person name="Mittanck D.W."/>
            <person name="Kim S."/>
            <person name="Rotwein P."/>
        </authorList>
    </citation>
    <scope>NUCLEOTIDE SEQUENCE [GENOMIC DNA] OF 1-44</scope>
    <source>
        <strain>129/Sv</strain>
    </source>
</reference>
<reference key="5">
    <citation type="journal article" date="1991" name="J. Biol. Chem.">
        <title>Differential regulation of mannose 6-phosphate receptors and their ligands during the myogenic development of C2 cells.</title>
        <authorList>
            <person name="Szebenyi G."/>
            <person name="Rotwein P."/>
        </authorList>
    </citation>
    <scope>NUCLEOTIDE SEQUENCE [GENOMIC DNA] OF 435-488</scope>
    <source>
        <tissue>Liver</tissue>
    </source>
</reference>
<reference key="6">
    <citation type="submission" date="1992-11" db="EMBL/GenBank/DDBJ databases">
        <authorList>
            <person name="Matzner U."/>
        </authorList>
    </citation>
    <scope>NUCLEOTIDE SEQUENCE [MRNA] OF 1625-2045</scope>
    <source>
        <strain>C57BL/6J</strain>
    </source>
</reference>
<reference key="7">
    <citation type="journal article" date="1993" name="J. Biol. Chem.">
        <title>Mutational analysis of the cation-independent mannose 6-phosphate/insulin-like growth factor II receptor. A consensus casein kinase II site followed by 2 leucines near the carboxyl terminus is important for intracellular targeting of lysosomal enzymes.</title>
        <authorList>
            <person name="Chen H.J."/>
            <person name="Remmler J."/>
            <person name="Delaney J.C."/>
            <person name="Messner D.J."/>
            <person name="Lobel P."/>
        </authorList>
    </citation>
    <scope>NUCLEOTIDE SEQUENCE [MRNA] OF 2249-2483</scope>
    <source>
        <strain>C57BL/6 X CBA</strain>
        <tissue>Liver</tissue>
    </source>
</reference>
<reference key="8">
    <citation type="journal article" date="2007" name="Proc. Natl. Acad. Sci. U.S.A.">
        <title>Large-scale phosphorylation analysis of mouse liver.</title>
        <authorList>
            <person name="Villen J."/>
            <person name="Beausoleil S.A."/>
            <person name="Gerber S.A."/>
            <person name="Gygi S.P."/>
        </authorList>
    </citation>
    <scope>PHOSPHORYLATION [LARGE SCALE ANALYSIS] AT SER-2401 AND SER-2476</scope>
    <scope>IDENTIFICATION BY MASS SPECTROMETRY [LARGE SCALE ANALYSIS]</scope>
    <source>
        <tissue>Liver</tissue>
    </source>
</reference>
<reference key="9">
    <citation type="journal article" date="2008" name="J. Proteome Res.">
        <title>Specific phosphopeptide enrichment with immobilized titanium ion affinity chromatography adsorbent for phosphoproteome analysis.</title>
        <authorList>
            <person name="Zhou H."/>
            <person name="Ye M."/>
            <person name="Dong J."/>
            <person name="Han G."/>
            <person name="Jiang X."/>
            <person name="Wu R."/>
            <person name="Zou H."/>
        </authorList>
    </citation>
    <scope>PHOSPHORYLATION [LARGE SCALE ANALYSIS] AT SER-2476</scope>
    <scope>IDENTIFICATION BY MASS SPECTROMETRY [LARGE SCALE ANALYSIS]</scope>
    <source>
        <tissue>Liver</tissue>
    </source>
</reference>
<reference key="10">
    <citation type="journal article" date="2009" name="Immunity">
        <title>The phagosomal proteome in interferon-gamma-activated macrophages.</title>
        <authorList>
            <person name="Trost M."/>
            <person name="English L."/>
            <person name="Lemieux S."/>
            <person name="Courcelles M."/>
            <person name="Desjardins M."/>
            <person name="Thibault P."/>
        </authorList>
    </citation>
    <scope>PHOSPHORYLATION [LARGE SCALE ANALYSIS] AT SER-2471 AND SER-2476</scope>
    <scope>IDENTIFICATION BY MASS SPECTROMETRY [LARGE SCALE ANALYSIS]</scope>
</reference>
<reference key="11">
    <citation type="journal article" date="2009" name="Mol. Cell. Proteomics">
        <title>The mouse C2C12 myoblast cell surface N-linked glycoproteome: identification, glycosite occupancy, and membrane orientation.</title>
        <authorList>
            <person name="Gundry R.L."/>
            <person name="Raginski K."/>
            <person name="Tarasova Y."/>
            <person name="Tchernyshyov I."/>
            <person name="Bausch-Fluck D."/>
            <person name="Elliott S.T."/>
            <person name="Boheler K.R."/>
            <person name="Van Eyk J.E."/>
            <person name="Wollscheid B."/>
        </authorList>
    </citation>
    <scope>GLYCOSYLATION [LARGE SCALE ANALYSIS] AT ASN-1532</scope>
    <source>
        <tissue>Myoblast</tissue>
    </source>
</reference>
<reference key="12">
    <citation type="journal article" date="2009" name="Mol. Cell. Proteomics">
        <title>Large scale localization of protein phosphorylation by use of electron capture dissociation mass spectrometry.</title>
        <authorList>
            <person name="Sweet S.M."/>
            <person name="Bailey C.M."/>
            <person name="Cunningham D.L."/>
            <person name="Heath J.K."/>
            <person name="Cooper H.J."/>
        </authorList>
    </citation>
    <scope>PHOSPHORYLATION [LARGE SCALE ANALYSIS] AT SER-2401 AND SER-2476</scope>
    <scope>IDENTIFICATION BY MASS SPECTROMETRY [LARGE SCALE ANALYSIS]</scope>
    <source>
        <tissue>Embryonic fibroblast</tissue>
    </source>
</reference>
<reference key="13">
    <citation type="journal article" date="2009" name="Nat. Biotechnol.">
        <title>Mass-spectrometric identification and relative quantification of N-linked cell surface glycoproteins.</title>
        <authorList>
            <person name="Wollscheid B."/>
            <person name="Bausch-Fluck D."/>
            <person name="Henderson C."/>
            <person name="O'Brien R."/>
            <person name="Bibel M."/>
            <person name="Schiess R."/>
            <person name="Aebersold R."/>
            <person name="Watts J.D."/>
        </authorList>
    </citation>
    <scope>GLYCOSYLATION [LARGE SCALE ANALYSIS] AT ASN-740; ASN-1532 AND ASN-1750</scope>
</reference>
<reference key="14">
    <citation type="journal article" date="2010" name="Cell">
        <title>A tissue-specific atlas of mouse protein phosphorylation and expression.</title>
        <authorList>
            <person name="Huttlin E.L."/>
            <person name="Jedrychowski M.P."/>
            <person name="Elias J.E."/>
            <person name="Goswami T."/>
            <person name="Rad R."/>
            <person name="Beausoleil S.A."/>
            <person name="Villen J."/>
            <person name="Haas W."/>
            <person name="Sowa M.E."/>
            <person name="Gygi S.P."/>
        </authorList>
    </citation>
    <scope>PHOSPHORYLATION [LARGE SCALE ANALYSIS] AT SER-2401; SER-2471 AND SER-2476</scope>
    <scope>IDENTIFICATION BY MASS SPECTROMETRY [LARGE SCALE ANALYSIS]</scope>
    <source>
        <tissue>Brain</tissue>
        <tissue>Brown adipose tissue</tissue>
        <tissue>Heart</tissue>
        <tissue>Kidney</tissue>
        <tissue>Liver</tissue>
        <tissue>Lung</tissue>
        <tissue>Pancreas</tissue>
        <tissue>Spleen</tissue>
        <tissue>Testis</tissue>
    </source>
</reference>
<reference key="15">
    <citation type="journal article" date="2014" name="Mol. Cell. Proteomics">
        <title>Immunoaffinity enrichment and mass spectrometry analysis of protein methylation.</title>
        <authorList>
            <person name="Guo A."/>
            <person name="Gu H."/>
            <person name="Zhou J."/>
            <person name="Mulhern D."/>
            <person name="Wang Y."/>
            <person name="Lee K.A."/>
            <person name="Yang V."/>
            <person name="Aguiar M."/>
            <person name="Kornhauser J."/>
            <person name="Jia X."/>
            <person name="Ren J."/>
            <person name="Beausoleil S.A."/>
            <person name="Silva J.C."/>
            <person name="Vemulapalli V."/>
            <person name="Bedford M.T."/>
            <person name="Comb M.J."/>
        </authorList>
    </citation>
    <scope>METHYLATION [LARGE SCALE ANALYSIS] AT ARG-2417</scope>
    <scope>IDENTIFICATION BY MASS SPECTROMETRY [LARGE SCALE ANALYSIS]</scope>
    <source>
        <tissue>Embryo</tissue>
    </source>
</reference>
<keyword id="KW-0007">Acetylation</keyword>
<keyword id="KW-1015">Disulfide bond</keyword>
<keyword id="KW-0967">Endosome</keyword>
<keyword id="KW-0325">Glycoprotein</keyword>
<keyword id="KW-0333">Golgi apparatus</keyword>
<keyword id="KW-0449">Lipoprotein</keyword>
<keyword id="KW-0472">Membrane</keyword>
<keyword id="KW-0488">Methylation</keyword>
<keyword id="KW-0564">Palmitate</keyword>
<keyword id="KW-0597">Phosphoprotein</keyword>
<keyword id="KW-0675">Receptor</keyword>
<keyword id="KW-1185">Reference proteome</keyword>
<keyword id="KW-0677">Repeat</keyword>
<keyword id="KW-0732">Signal</keyword>
<keyword id="KW-0812">Transmembrane</keyword>
<keyword id="KW-1133">Transmembrane helix</keyword>
<keyword id="KW-0813">Transport</keyword>